<organism>
    <name type="scientific">Schizosaccharomyces pombe (strain 972 / ATCC 24843)</name>
    <name type="common">Fission yeast</name>
    <dbReference type="NCBI Taxonomy" id="284812"/>
    <lineage>
        <taxon>Eukaryota</taxon>
        <taxon>Fungi</taxon>
        <taxon>Dikarya</taxon>
        <taxon>Ascomycota</taxon>
        <taxon>Taphrinomycotina</taxon>
        <taxon>Schizosaccharomycetes</taxon>
        <taxon>Schizosaccharomycetales</taxon>
        <taxon>Schizosaccharomycetaceae</taxon>
        <taxon>Schizosaccharomyces</taxon>
    </lineage>
</organism>
<proteinExistence type="evidence at protein level"/>
<evidence type="ECO:0000250" key="1"/>
<evidence type="ECO:0000250" key="2">
    <source>
        <dbReference type="UniProtKB" id="P32529"/>
    </source>
</evidence>
<evidence type="ECO:0000255" key="3"/>
<evidence type="ECO:0000255" key="4">
    <source>
        <dbReference type="PROSITE-ProRule" id="PRU00472"/>
    </source>
</evidence>
<evidence type="ECO:0000255" key="5">
    <source>
        <dbReference type="PROSITE-ProRule" id="PRU10145"/>
    </source>
</evidence>
<evidence type="ECO:0000269" key="6">
    <source>
    </source>
</evidence>
<evidence type="ECO:0000305" key="7"/>
<comment type="function">
    <text evidence="6">DNA-dependent RNA polymerase catalyzes the transcription of DNA into RNA using the four ribonucleoside triphosphates as substrates. Component of RNA polymerase I which synthesizes ribosomal RNA precursors. Required for growth at higher temperatures.</text>
</comment>
<comment type="subunit">
    <text evidence="1">Component of the RNA polymerase I (Pol I) complex consisting of at least 13 subunits.</text>
</comment>
<comment type="subcellular location">
    <subcellularLocation>
        <location evidence="2">Nucleus</location>
        <location evidence="2">Nucleolus</location>
    </subcellularLocation>
</comment>
<comment type="domain">
    <text>The N-terminal zinc-finger domain but not the C-terminal one is required for rpa12 function.</text>
</comment>
<comment type="similarity">
    <text evidence="7">Belongs to the archaeal RpoM/eukaryotic RPA12/RPB9/RPC11 RNA polymerase family.</text>
</comment>
<reference key="1">
    <citation type="submission" date="1999-12" db="EMBL/GenBank/DDBJ databases">
        <title>Molecular cloning and functional characterization of the fission yeast rpa12+ cDNA encoding the specific subunit of Schizosaccharomyces pombe RNA polymerase I.</title>
        <authorList>
            <person name="Shematorova E.K."/>
            <person name="Bobik T.V."/>
            <person name="Shpakovski G.V."/>
        </authorList>
    </citation>
    <scope>NUCLEOTIDE SEQUENCE [MRNA]</scope>
</reference>
<reference key="2">
    <citation type="journal article" date="2001" name="Mol. Gen. Genet.">
        <title>Isolation and characterization of the fission yeast gene Sprpa12+ reveals that the conserved C-terminal zinc-finger region is dispensable for the function of its product.</title>
        <authorList>
            <person name="Imazawa Y."/>
            <person name="Imai K."/>
            <person name="Yao Y."/>
            <person name="Yamamoto K."/>
            <person name="Hisatake K."/>
            <person name="Muramatsu M."/>
            <person name="Nogi Y."/>
        </authorList>
    </citation>
    <scope>NUCLEOTIDE SEQUENCE [GENOMIC DNA / MRNA]</scope>
    <scope>FUNCTION</scope>
</reference>
<reference key="3">
    <citation type="journal article" date="2002" name="Nature">
        <title>The genome sequence of Schizosaccharomyces pombe.</title>
        <authorList>
            <person name="Wood V."/>
            <person name="Gwilliam R."/>
            <person name="Rajandream M.A."/>
            <person name="Lyne M.H."/>
            <person name="Lyne R."/>
            <person name="Stewart A."/>
            <person name="Sgouros J.G."/>
            <person name="Peat N."/>
            <person name="Hayles J."/>
            <person name="Baker S.G."/>
            <person name="Basham D."/>
            <person name="Bowman S."/>
            <person name="Brooks K."/>
            <person name="Brown D."/>
            <person name="Brown S."/>
            <person name="Chillingworth T."/>
            <person name="Churcher C.M."/>
            <person name="Collins M."/>
            <person name="Connor R."/>
            <person name="Cronin A."/>
            <person name="Davis P."/>
            <person name="Feltwell T."/>
            <person name="Fraser A."/>
            <person name="Gentles S."/>
            <person name="Goble A."/>
            <person name="Hamlin N."/>
            <person name="Harris D.E."/>
            <person name="Hidalgo J."/>
            <person name="Hodgson G."/>
            <person name="Holroyd S."/>
            <person name="Hornsby T."/>
            <person name="Howarth S."/>
            <person name="Huckle E.J."/>
            <person name="Hunt S."/>
            <person name="Jagels K."/>
            <person name="James K.D."/>
            <person name="Jones L."/>
            <person name="Jones M."/>
            <person name="Leather S."/>
            <person name="McDonald S."/>
            <person name="McLean J."/>
            <person name="Mooney P."/>
            <person name="Moule S."/>
            <person name="Mungall K.L."/>
            <person name="Murphy L.D."/>
            <person name="Niblett D."/>
            <person name="Odell C."/>
            <person name="Oliver K."/>
            <person name="O'Neil S."/>
            <person name="Pearson D."/>
            <person name="Quail M.A."/>
            <person name="Rabbinowitsch E."/>
            <person name="Rutherford K.M."/>
            <person name="Rutter S."/>
            <person name="Saunders D."/>
            <person name="Seeger K."/>
            <person name="Sharp S."/>
            <person name="Skelton J."/>
            <person name="Simmonds M.N."/>
            <person name="Squares R."/>
            <person name="Squares S."/>
            <person name="Stevens K."/>
            <person name="Taylor K."/>
            <person name="Taylor R.G."/>
            <person name="Tivey A."/>
            <person name="Walsh S.V."/>
            <person name="Warren T."/>
            <person name="Whitehead S."/>
            <person name="Woodward J.R."/>
            <person name="Volckaert G."/>
            <person name="Aert R."/>
            <person name="Robben J."/>
            <person name="Grymonprez B."/>
            <person name="Weltjens I."/>
            <person name="Vanstreels E."/>
            <person name="Rieger M."/>
            <person name="Schaefer M."/>
            <person name="Mueller-Auer S."/>
            <person name="Gabel C."/>
            <person name="Fuchs M."/>
            <person name="Duesterhoeft A."/>
            <person name="Fritzc C."/>
            <person name="Holzer E."/>
            <person name="Moestl D."/>
            <person name="Hilbert H."/>
            <person name="Borzym K."/>
            <person name="Langer I."/>
            <person name="Beck A."/>
            <person name="Lehrach H."/>
            <person name="Reinhardt R."/>
            <person name="Pohl T.M."/>
            <person name="Eger P."/>
            <person name="Zimmermann W."/>
            <person name="Wedler H."/>
            <person name="Wambutt R."/>
            <person name="Purnelle B."/>
            <person name="Goffeau A."/>
            <person name="Cadieu E."/>
            <person name="Dreano S."/>
            <person name="Gloux S."/>
            <person name="Lelaure V."/>
            <person name="Mottier S."/>
            <person name="Galibert F."/>
            <person name="Aves S.J."/>
            <person name="Xiang Z."/>
            <person name="Hunt C."/>
            <person name="Moore K."/>
            <person name="Hurst S.M."/>
            <person name="Lucas M."/>
            <person name="Rochet M."/>
            <person name="Gaillardin C."/>
            <person name="Tallada V.A."/>
            <person name="Garzon A."/>
            <person name="Thode G."/>
            <person name="Daga R.R."/>
            <person name="Cruzado L."/>
            <person name="Jimenez J."/>
            <person name="Sanchez M."/>
            <person name="del Rey F."/>
            <person name="Benito J."/>
            <person name="Dominguez A."/>
            <person name="Revuelta J.L."/>
            <person name="Moreno S."/>
            <person name="Armstrong J."/>
            <person name="Forsburg S.L."/>
            <person name="Cerutti L."/>
            <person name="Lowe T."/>
            <person name="McCombie W.R."/>
            <person name="Paulsen I."/>
            <person name="Potashkin J."/>
            <person name="Shpakovski G.V."/>
            <person name="Ussery D."/>
            <person name="Barrell B.G."/>
            <person name="Nurse P."/>
        </authorList>
    </citation>
    <scope>NUCLEOTIDE SEQUENCE [LARGE SCALE GENOMIC DNA]</scope>
    <source>
        <strain>972 / ATCC 24843</strain>
    </source>
</reference>
<protein>
    <recommendedName>
        <fullName>DNA-directed RNA polymerase I subunit RPA12</fullName>
    </recommendedName>
    <alternativeName>
        <fullName>DNA-directed RNA polymerase I 13.1 kDa polypeptide</fullName>
    </alternativeName>
</protein>
<sequence>MSAIGSLIFCSECGNLLESTTAQWTTCDQCQSVYPSEQFANLVVETKSSASAFPSALKLKHSIVQVESQKEEAATIEEKCPKCGNDHMTFHTLQLRSADEGSTVFYECPRCAYKFSTNN</sequence>
<accession>O94703</accession>
<keyword id="KW-0002">3D-structure</keyword>
<keyword id="KW-0240">DNA-directed RNA polymerase</keyword>
<keyword id="KW-0479">Metal-binding</keyword>
<keyword id="KW-0539">Nucleus</keyword>
<keyword id="KW-1185">Reference proteome</keyword>
<keyword id="KW-0804">Transcription</keyword>
<keyword id="KW-0862">Zinc</keyword>
<keyword id="KW-0863">Zinc-finger</keyword>
<dbReference type="EMBL" id="AF219943">
    <property type="protein sequence ID" value="AAF80580.1"/>
    <property type="molecule type" value="mRNA"/>
</dbReference>
<dbReference type="EMBL" id="AB023403">
    <property type="protein sequence ID" value="BAA87928.1"/>
    <property type="molecule type" value="Genomic_DNA"/>
</dbReference>
<dbReference type="EMBL" id="AB023817">
    <property type="protein sequence ID" value="BAA87930.1"/>
    <property type="molecule type" value="mRNA"/>
</dbReference>
<dbReference type="EMBL" id="CU329672">
    <property type="protein sequence ID" value="CAA22541.1"/>
    <property type="molecule type" value="Genomic_DNA"/>
</dbReference>
<dbReference type="PIR" id="T40892">
    <property type="entry name" value="T40892"/>
</dbReference>
<dbReference type="RefSeq" id="NP_588059.1">
    <property type="nucleotide sequence ID" value="NM_001023051.2"/>
</dbReference>
<dbReference type="PDB" id="7AOC">
    <property type="method" value="EM"/>
    <property type="resolution" value="3.84 A"/>
    <property type="chains" value="I=1-119"/>
</dbReference>
<dbReference type="PDB" id="7AOD">
    <property type="method" value="EM"/>
    <property type="resolution" value="4.50 A"/>
    <property type="chains" value="I/U=1-119"/>
</dbReference>
<dbReference type="PDB" id="7AOE">
    <property type="method" value="EM"/>
    <property type="resolution" value="3.90 A"/>
    <property type="chains" value="I=1-119"/>
</dbReference>
<dbReference type="PDBsum" id="7AOC"/>
<dbReference type="PDBsum" id="7AOD"/>
<dbReference type="PDBsum" id="7AOE"/>
<dbReference type="EMDB" id="EMD-11840"/>
<dbReference type="EMDB" id="EMD-11841"/>
<dbReference type="EMDB" id="EMD-11842"/>
<dbReference type="SMR" id="O94703"/>
<dbReference type="BioGRID" id="275483">
    <property type="interactions" value="229"/>
</dbReference>
<dbReference type="ComplexPortal" id="CPX-8907">
    <property type="entry name" value="DNA-directed RNA polymerase I complex"/>
</dbReference>
<dbReference type="FunCoup" id="O94703">
    <property type="interactions" value="539"/>
</dbReference>
<dbReference type="STRING" id="284812.O94703"/>
<dbReference type="iPTMnet" id="O94703"/>
<dbReference type="PaxDb" id="4896-SPCC1259.03.1"/>
<dbReference type="EnsemblFungi" id="SPCC1259.03.1">
    <property type="protein sequence ID" value="SPCC1259.03.1:pep"/>
    <property type="gene ID" value="SPCC1259.03"/>
</dbReference>
<dbReference type="GeneID" id="2538906"/>
<dbReference type="KEGG" id="spo:2538906"/>
<dbReference type="PomBase" id="SPCC1259.03">
    <property type="gene designation" value="rpa12"/>
</dbReference>
<dbReference type="VEuPathDB" id="FungiDB:SPCC1259.03"/>
<dbReference type="eggNOG" id="KOG2907">
    <property type="taxonomic scope" value="Eukaryota"/>
</dbReference>
<dbReference type="HOGENOM" id="CLU_093932_1_1_1"/>
<dbReference type="InParanoid" id="O94703"/>
<dbReference type="OMA" id="EMQYHTL"/>
<dbReference type="PhylomeDB" id="O94703"/>
<dbReference type="Reactome" id="R-SPO-73762">
    <property type="pathway name" value="RNA Polymerase I Transcription Initiation"/>
</dbReference>
<dbReference type="Reactome" id="R-SPO-73772">
    <property type="pathway name" value="RNA Polymerase I Promoter Escape"/>
</dbReference>
<dbReference type="PRO" id="PR:O94703"/>
<dbReference type="Proteomes" id="UP000002485">
    <property type="component" value="Chromosome III"/>
</dbReference>
<dbReference type="GO" id="GO:0005829">
    <property type="term" value="C:cytosol"/>
    <property type="evidence" value="ECO:0007005"/>
    <property type="project" value="PomBase"/>
</dbReference>
<dbReference type="GO" id="GO:0005730">
    <property type="term" value="C:nucleolus"/>
    <property type="evidence" value="ECO:0007005"/>
    <property type="project" value="PomBase"/>
</dbReference>
<dbReference type="GO" id="GO:0005634">
    <property type="term" value="C:nucleus"/>
    <property type="evidence" value="ECO:0007005"/>
    <property type="project" value="PomBase"/>
</dbReference>
<dbReference type="GO" id="GO:0005736">
    <property type="term" value="C:RNA polymerase I complex"/>
    <property type="evidence" value="ECO:0000314"/>
    <property type="project" value="PomBase"/>
</dbReference>
<dbReference type="GO" id="GO:0003899">
    <property type="term" value="F:DNA-directed RNA polymerase activity"/>
    <property type="evidence" value="ECO:0007669"/>
    <property type="project" value="InterPro"/>
</dbReference>
<dbReference type="GO" id="GO:0003676">
    <property type="term" value="F:nucleic acid binding"/>
    <property type="evidence" value="ECO:0007669"/>
    <property type="project" value="InterPro"/>
</dbReference>
<dbReference type="GO" id="GO:0008270">
    <property type="term" value="F:zinc ion binding"/>
    <property type="evidence" value="ECO:0007669"/>
    <property type="project" value="UniProtKB-KW"/>
</dbReference>
<dbReference type="GO" id="GO:0006363">
    <property type="term" value="P:termination of RNA polymerase I transcription"/>
    <property type="evidence" value="ECO:0000316"/>
    <property type="project" value="PomBase"/>
</dbReference>
<dbReference type="GO" id="GO:0006362">
    <property type="term" value="P:transcription elongation by RNA polymerase I"/>
    <property type="evidence" value="ECO:0000269"/>
    <property type="project" value="PomBase"/>
</dbReference>
<dbReference type="CDD" id="cd10507">
    <property type="entry name" value="Zn-ribbon_RPA12"/>
    <property type="match status" value="1"/>
</dbReference>
<dbReference type="Gene3D" id="2.20.25.10">
    <property type="match status" value="1"/>
</dbReference>
<dbReference type="InterPro" id="IPR019761">
    <property type="entry name" value="DNA-dir_RNA_pol-M_15_CS"/>
</dbReference>
<dbReference type="InterPro" id="IPR012164">
    <property type="entry name" value="Rpa12/Rpb9/Rpc10/TFS"/>
</dbReference>
<dbReference type="InterPro" id="IPR034004">
    <property type="entry name" value="Zn_ribbon_RPA12_C"/>
</dbReference>
<dbReference type="InterPro" id="IPR001529">
    <property type="entry name" value="Zn_ribbon_RPB9"/>
</dbReference>
<dbReference type="InterPro" id="IPR001222">
    <property type="entry name" value="Znf_TFIIS"/>
</dbReference>
<dbReference type="PANTHER" id="PTHR11239">
    <property type="entry name" value="DNA-DIRECTED RNA POLYMERASE"/>
    <property type="match status" value="1"/>
</dbReference>
<dbReference type="PANTHER" id="PTHR11239:SF14">
    <property type="entry name" value="DNA-DIRECTED RNA POLYMERASE I SUBUNIT RPA12"/>
    <property type="match status" value="1"/>
</dbReference>
<dbReference type="Pfam" id="PF02150">
    <property type="entry name" value="Zn_ribbon_RPB9"/>
    <property type="match status" value="1"/>
</dbReference>
<dbReference type="Pfam" id="PF01096">
    <property type="entry name" value="Zn_ribbon_TFIIS"/>
    <property type="match status" value="1"/>
</dbReference>
<dbReference type="PIRSF" id="PIRSF005586">
    <property type="entry name" value="RNApol_RpoM"/>
    <property type="match status" value="1"/>
</dbReference>
<dbReference type="SMART" id="SM00661">
    <property type="entry name" value="RPOL9"/>
    <property type="match status" value="1"/>
</dbReference>
<dbReference type="SMART" id="SM00440">
    <property type="entry name" value="ZnF_C2C2"/>
    <property type="match status" value="1"/>
</dbReference>
<dbReference type="SUPFAM" id="SSF57783">
    <property type="entry name" value="Zinc beta-ribbon"/>
    <property type="match status" value="1"/>
</dbReference>
<dbReference type="PROSITE" id="PS01030">
    <property type="entry name" value="RNA_POL_M_15KD"/>
    <property type="match status" value="1"/>
</dbReference>
<dbReference type="PROSITE" id="PS00466">
    <property type="entry name" value="ZF_TFIIS_1"/>
    <property type="match status" value="1"/>
</dbReference>
<dbReference type="PROSITE" id="PS51133">
    <property type="entry name" value="ZF_TFIIS_2"/>
    <property type="match status" value="1"/>
</dbReference>
<feature type="chain" id="PRO_0000121464" description="DNA-directed RNA polymerase I subunit RPA12">
    <location>
        <begin position="1"/>
        <end position="119"/>
    </location>
</feature>
<feature type="zinc finger region" description="C4-type" evidence="3">
    <location>
        <begin position="10"/>
        <end position="30"/>
    </location>
</feature>
<feature type="zinc finger region" description="TFIIS-type" evidence="4">
    <location>
        <begin position="76"/>
        <end position="116"/>
    </location>
</feature>
<feature type="binding site" evidence="5">
    <location>
        <position position="10"/>
    </location>
    <ligand>
        <name>Zn(2+)</name>
        <dbReference type="ChEBI" id="CHEBI:29105"/>
        <label>1</label>
    </ligand>
</feature>
<feature type="binding site" evidence="5">
    <location>
        <position position="13"/>
    </location>
    <ligand>
        <name>Zn(2+)</name>
        <dbReference type="ChEBI" id="CHEBI:29105"/>
        <label>1</label>
    </ligand>
</feature>
<feature type="binding site" evidence="5">
    <location>
        <position position="27"/>
    </location>
    <ligand>
        <name>Zn(2+)</name>
        <dbReference type="ChEBI" id="CHEBI:29105"/>
        <label>1</label>
    </ligand>
</feature>
<feature type="binding site" evidence="5">
    <location>
        <position position="30"/>
    </location>
    <ligand>
        <name>Zn(2+)</name>
        <dbReference type="ChEBI" id="CHEBI:29105"/>
        <label>1</label>
    </ligand>
</feature>
<feature type="binding site" evidence="4">
    <location>
        <position position="80"/>
    </location>
    <ligand>
        <name>Zn(2+)</name>
        <dbReference type="ChEBI" id="CHEBI:29105"/>
        <label>2</label>
    </ligand>
</feature>
<feature type="binding site" evidence="4">
    <location>
        <position position="83"/>
    </location>
    <ligand>
        <name>Zn(2+)</name>
        <dbReference type="ChEBI" id="CHEBI:29105"/>
        <label>2</label>
    </ligand>
</feature>
<feature type="binding site" evidence="4">
    <location>
        <position position="108"/>
    </location>
    <ligand>
        <name>Zn(2+)</name>
        <dbReference type="ChEBI" id="CHEBI:29105"/>
        <label>2</label>
    </ligand>
</feature>
<feature type="binding site" evidence="4">
    <location>
        <position position="111"/>
    </location>
    <ligand>
        <name>Zn(2+)</name>
        <dbReference type="ChEBI" id="CHEBI:29105"/>
        <label>2</label>
    </ligand>
</feature>
<gene>
    <name type="primary">rpa12</name>
    <name type="ORF">SPCC1259.03</name>
</gene>
<name>RPA12_SCHPO</name>